<proteinExistence type="inferred from homology"/>
<protein>
    <recommendedName>
        <fullName evidence="1">tRNA(Ile)-lysidine synthase</fullName>
        <ecNumber evidence="1">6.3.4.19</ecNumber>
    </recommendedName>
    <alternativeName>
        <fullName evidence="1">tRNA(Ile)-2-lysyl-cytidine synthase</fullName>
    </alternativeName>
    <alternativeName>
        <fullName evidence="1">tRNA(Ile)-lysidine synthetase</fullName>
    </alternativeName>
</protein>
<feature type="chain" id="PRO_0000181784" description="tRNA(Ile)-lysidine synthase">
    <location>
        <begin position="1"/>
        <end position="421"/>
    </location>
</feature>
<feature type="binding site" evidence="1">
    <location>
        <begin position="26"/>
        <end position="31"/>
    </location>
    <ligand>
        <name>ATP</name>
        <dbReference type="ChEBI" id="CHEBI:30616"/>
    </ligand>
</feature>
<comment type="function">
    <text evidence="1">Ligates lysine onto the cytidine present at position 34 of the AUA codon-specific tRNA(Ile) that contains the anticodon CAU, in an ATP-dependent manner. Cytidine is converted to lysidine, thus changing the amino acid specificity of the tRNA from methionine to isoleucine.</text>
</comment>
<comment type="catalytic activity">
    <reaction evidence="1">
        <text>cytidine(34) in tRNA(Ile2) + L-lysine + ATP = lysidine(34) in tRNA(Ile2) + AMP + diphosphate + H(+)</text>
        <dbReference type="Rhea" id="RHEA:43744"/>
        <dbReference type="Rhea" id="RHEA-COMP:10625"/>
        <dbReference type="Rhea" id="RHEA-COMP:10670"/>
        <dbReference type="ChEBI" id="CHEBI:15378"/>
        <dbReference type="ChEBI" id="CHEBI:30616"/>
        <dbReference type="ChEBI" id="CHEBI:32551"/>
        <dbReference type="ChEBI" id="CHEBI:33019"/>
        <dbReference type="ChEBI" id="CHEBI:82748"/>
        <dbReference type="ChEBI" id="CHEBI:83665"/>
        <dbReference type="ChEBI" id="CHEBI:456215"/>
        <dbReference type="EC" id="6.3.4.19"/>
    </reaction>
</comment>
<comment type="subcellular location">
    <subcellularLocation>
        <location evidence="1">Cytoplasm</location>
    </subcellularLocation>
</comment>
<comment type="domain">
    <text>The N-terminal region contains the highly conserved SGGXDS motif, predicted to be a P-loop motif involved in ATP binding.</text>
</comment>
<comment type="similarity">
    <text evidence="1">Belongs to the tRNA(Ile)-lysidine synthase family.</text>
</comment>
<name>TILS_STRT1</name>
<dbReference type="EC" id="6.3.4.19" evidence="1"/>
<dbReference type="EMBL" id="CP000024">
    <property type="protein sequence ID" value="AAV61629.1"/>
    <property type="molecule type" value="Genomic_DNA"/>
</dbReference>
<dbReference type="RefSeq" id="WP_011225242.1">
    <property type="nucleotide sequence ID" value="NC_006449.1"/>
</dbReference>
<dbReference type="SMR" id="Q5M217"/>
<dbReference type="KEGG" id="stc:str0010"/>
<dbReference type="HOGENOM" id="CLU_018869_0_2_9"/>
<dbReference type="GO" id="GO:0005737">
    <property type="term" value="C:cytoplasm"/>
    <property type="evidence" value="ECO:0007669"/>
    <property type="project" value="UniProtKB-SubCell"/>
</dbReference>
<dbReference type="GO" id="GO:0005524">
    <property type="term" value="F:ATP binding"/>
    <property type="evidence" value="ECO:0007669"/>
    <property type="project" value="UniProtKB-UniRule"/>
</dbReference>
<dbReference type="GO" id="GO:0032267">
    <property type="term" value="F:tRNA(Ile)-lysidine synthase activity"/>
    <property type="evidence" value="ECO:0007669"/>
    <property type="project" value="UniProtKB-EC"/>
</dbReference>
<dbReference type="GO" id="GO:0006400">
    <property type="term" value="P:tRNA modification"/>
    <property type="evidence" value="ECO:0007669"/>
    <property type="project" value="UniProtKB-UniRule"/>
</dbReference>
<dbReference type="CDD" id="cd01992">
    <property type="entry name" value="TilS_N"/>
    <property type="match status" value="1"/>
</dbReference>
<dbReference type="Gene3D" id="3.40.50.620">
    <property type="entry name" value="HUPs"/>
    <property type="match status" value="1"/>
</dbReference>
<dbReference type="HAMAP" id="MF_01161">
    <property type="entry name" value="tRNA_Ile_lys_synt"/>
    <property type="match status" value="1"/>
</dbReference>
<dbReference type="InterPro" id="IPR012796">
    <property type="entry name" value="Lysidine-tRNA-synth_C"/>
</dbReference>
<dbReference type="InterPro" id="IPR014729">
    <property type="entry name" value="Rossmann-like_a/b/a_fold"/>
</dbReference>
<dbReference type="InterPro" id="IPR011063">
    <property type="entry name" value="TilS/TtcA_N"/>
</dbReference>
<dbReference type="InterPro" id="IPR012094">
    <property type="entry name" value="tRNA_Ile_lys_synt"/>
</dbReference>
<dbReference type="InterPro" id="IPR012795">
    <property type="entry name" value="tRNA_Ile_lys_synt_N"/>
</dbReference>
<dbReference type="NCBIfam" id="TIGR02433">
    <property type="entry name" value="lysidine_TilS_C"/>
    <property type="match status" value="1"/>
</dbReference>
<dbReference type="NCBIfam" id="TIGR02432">
    <property type="entry name" value="lysidine_TilS_N"/>
    <property type="match status" value="1"/>
</dbReference>
<dbReference type="PANTHER" id="PTHR43033">
    <property type="entry name" value="TRNA(ILE)-LYSIDINE SYNTHASE-RELATED"/>
    <property type="match status" value="1"/>
</dbReference>
<dbReference type="PANTHER" id="PTHR43033:SF1">
    <property type="entry name" value="TRNA(ILE)-LYSIDINE SYNTHASE-RELATED"/>
    <property type="match status" value="1"/>
</dbReference>
<dbReference type="Pfam" id="PF01171">
    <property type="entry name" value="ATP_bind_3"/>
    <property type="match status" value="1"/>
</dbReference>
<dbReference type="SMART" id="SM00977">
    <property type="entry name" value="TilS_C"/>
    <property type="match status" value="1"/>
</dbReference>
<dbReference type="SUPFAM" id="SSF52402">
    <property type="entry name" value="Adenine nucleotide alpha hydrolases-like"/>
    <property type="match status" value="1"/>
</dbReference>
<dbReference type="SUPFAM" id="SSF56037">
    <property type="entry name" value="PheT/TilS domain"/>
    <property type="match status" value="1"/>
</dbReference>
<accession>Q5M217</accession>
<reference key="1">
    <citation type="journal article" date="2004" name="Nat. Biotechnol.">
        <title>Complete sequence and comparative genome analysis of the dairy bacterium Streptococcus thermophilus.</title>
        <authorList>
            <person name="Bolotin A."/>
            <person name="Quinquis B."/>
            <person name="Renault P."/>
            <person name="Sorokin A."/>
            <person name="Ehrlich S.D."/>
            <person name="Kulakauskas S."/>
            <person name="Lapidus A."/>
            <person name="Goltsman E."/>
            <person name="Mazur M."/>
            <person name="Pusch G.D."/>
            <person name="Fonstein M."/>
            <person name="Overbeek R."/>
            <person name="Kyprides N."/>
            <person name="Purnelle B."/>
            <person name="Prozzi D."/>
            <person name="Ngui K."/>
            <person name="Masuy D."/>
            <person name="Hancy F."/>
            <person name="Burteau S."/>
            <person name="Boutry M."/>
            <person name="Delcour J."/>
            <person name="Goffeau A."/>
            <person name="Hols P."/>
        </authorList>
    </citation>
    <scope>NUCLEOTIDE SEQUENCE [LARGE SCALE GENOMIC DNA]</scope>
    <source>
        <strain>CNRZ 1066</strain>
    </source>
</reference>
<sequence>MTEKLLQMMQEKGYFNQHKKVLVAVSGGADSMSLLHFLYNHQKDLDIQLGIAHVNHKQRQESEYEENYLRHWAKEHKVPFHYSAFSGKFSENAARTFRYDFFKRIMKEADYSALVTAHHADDQAETIFMRLLRGSRLRHLSGICDVRSFGTGQIIRPFLHIPKDQLPVTFHFEDRSNSSLAYLRNRIRLTYLPTLSQENPKFKEHLCLLADEIALMDKALEELTKDITITDLSVFQQQTDAVQHLLIQSYLESFPDLQLSKGQFNQLMSFLRKKTSGKMPLKNGYVLVKTQTDFLITKEEPISLSSPSLLEFGKSIVFEEYLLTFSEPHVVSNVDTINIWSDAPIVIRHRHEGDRIDLGTHHKKIRRLFIDNKISEKDRQKAIIGEQDGQIIFLYVAGRLYLKKRPKNAILYGTVVIYKKF</sequence>
<evidence type="ECO:0000255" key="1">
    <source>
        <dbReference type="HAMAP-Rule" id="MF_01161"/>
    </source>
</evidence>
<keyword id="KW-0067">ATP-binding</keyword>
<keyword id="KW-0963">Cytoplasm</keyword>
<keyword id="KW-0436">Ligase</keyword>
<keyword id="KW-0547">Nucleotide-binding</keyword>
<keyword id="KW-0819">tRNA processing</keyword>
<gene>
    <name evidence="1" type="primary">tilS</name>
    <name type="ordered locus">str0010</name>
</gene>
<organism>
    <name type="scientific">Streptococcus thermophilus (strain CNRZ 1066)</name>
    <dbReference type="NCBI Taxonomy" id="299768"/>
    <lineage>
        <taxon>Bacteria</taxon>
        <taxon>Bacillati</taxon>
        <taxon>Bacillota</taxon>
        <taxon>Bacilli</taxon>
        <taxon>Lactobacillales</taxon>
        <taxon>Streptococcaceae</taxon>
        <taxon>Streptococcus</taxon>
    </lineage>
</organism>